<accession>Q89AG6</accession>
<name>PTGCB_BUCBP</name>
<gene>
    <name type="primary">ptsG</name>
    <name type="ordered locus">bbp_326</name>
</gene>
<comment type="function">
    <text evidence="1">The phosphoenolpyruvate-dependent sugar phosphotransferase system (sugar PTS), a major carbohydrate active transport system, catalyzes the phosphorylation of incoming sugar substrates concomitantly with their translocation across the cell membrane. The enzyme II complex composed of PtsG and Crr is involved in glucose transport.</text>
</comment>
<comment type="catalytic activity">
    <reaction evidence="1">
        <text>N(pros)-phospho-L-histidyl-[protein] + D-glucose(out) = D-glucose 6-phosphate(in) + L-histidyl-[protein]</text>
        <dbReference type="Rhea" id="RHEA:33367"/>
        <dbReference type="Rhea" id="RHEA-COMP:9745"/>
        <dbReference type="Rhea" id="RHEA-COMP:9746"/>
        <dbReference type="ChEBI" id="CHEBI:4167"/>
        <dbReference type="ChEBI" id="CHEBI:29979"/>
        <dbReference type="ChEBI" id="CHEBI:61548"/>
        <dbReference type="ChEBI" id="CHEBI:64837"/>
        <dbReference type="EC" id="2.7.1.199"/>
    </reaction>
</comment>
<comment type="subcellular location">
    <subcellularLocation>
        <location evidence="3">Cell inner membrane</location>
        <topology evidence="3">Multi-pass membrane protein</topology>
    </subcellularLocation>
</comment>
<comment type="domain">
    <text evidence="2">The EIIB domain is phosphorylated by phospho-EIIA on a cysteinyl or histidyl residue, depending on the transported sugar. Then, it transfers the phosphoryl group to the sugar substrate concomitantly with the sugar uptake processed by the EIIC domain.</text>
</comment>
<comment type="domain">
    <text evidence="3">The EIIC domain forms the PTS system translocation channel and contains the specific substrate-binding site.</text>
</comment>
<reference key="1">
    <citation type="journal article" date="2003" name="Proc. Natl. Acad. Sci. U.S.A.">
        <title>Reductive genome evolution in Buchnera aphidicola.</title>
        <authorList>
            <person name="van Ham R.C.H.J."/>
            <person name="Kamerbeek J."/>
            <person name="Palacios C."/>
            <person name="Rausell C."/>
            <person name="Abascal F."/>
            <person name="Bastolla U."/>
            <person name="Fernandez J.M."/>
            <person name="Jimenez L."/>
            <person name="Postigo M."/>
            <person name="Silva F.J."/>
            <person name="Tamames J."/>
            <person name="Viguera E."/>
            <person name="Latorre A."/>
            <person name="Valencia A."/>
            <person name="Moran F."/>
            <person name="Moya A."/>
        </authorList>
    </citation>
    <scope>NUCLEOTIDE SEQUENCE [LARGE SCALE GENOMIC DNA]</scope>
    <source>
        <strain>Bp</strain>
    </source>
</reference>
<organism>
    <name type="scientific">Buchnera aphidicola subsp. Baizongia pistaciae (strain Bp)</name>
    <dbReference type="NCBI Taxonomy" id="224915"/>
    <lineage>
        <taxon>Bacteria</taxon>
        <taxon>Pseudomonadati</taxon>
        <taxon>Pseudomonadota</taxon>
        <taxon>Gammaproteobacteria</taxon>
        <taxon>Enterobacterales</taxon>
        <taxon>Erwiniaceae</taxon>
        <taxon>Buchnera</taxon>
    </lineage>
</organism>
<dbReference type="EC" id="2.7.1.199" evidence="1"/>
<dbReference type="EMBL" id="AE016826">
    <property type="protein sequence ID" value="AAO27048.1"/>
    <property type="molecule type" value="Genomic_DNA"/>
</dbReference>
<dbReference type="RefSeq" id="WP_011091449.1">
    <property type="nucleotide sequence ID" value="NC_004545.1"/>
</dbReference>
<dbReference type="SMR" id="Q89AG6"/>
<dbReference type="STRING" id="224915.bbp_326"/>
<dbReference type="KEGG" id="bab:bbp_326"/>
<dbReference type="eggNOG" id="COG1263">
    <property type="taxonomic scope" value="Bacteria"/>
</dbReference>
<dbReference type="eggNOG" id="COG1264">
    <property type="taxonomic scope" value="Bacteria"/>
</dbReference>
<dbReference type="HOGENOM" id="CLU_012312_1_0_6"/>
<dbReference type="OrthoDB" id="7571469at2"/>
<dbReference type="Proteomes" id="UP000000601">
    <property type="component" value="Chromosome"/>
</dbReference>
<dbReference type="GO" id="GO:0005886">
    <property type="term" value="C:plasma membrane"/>
    <property type="evidence" value="ECO:0007669"/>
    <property type="project" value="UniProtKB-SubCell"/>
</dbReference>
<dbReference type="GO" id="GO:0055056">
    <property type="term" value="F:D-glucose transmembrane transporter activity"/>
    <property type="evidence" value="ECO:0007669"/>
    <property type="project" value="InterPro"/>
</dbReference>
<dbReference type="GO" id="GO:0016301">
    <property type="term" value="F:kinase activity"/>
    <property type="evidence" value="ECO:0007669"/>
    <property type="project" value="UniProtKB-KW"/>
</dbReference>
<dbReference type="GO" id="GO:0008982">
    <property type="term" value="F:protein-N(PI)-phosphohistidine-sugar phosphotransferase activity"/>
    <property type="evidence" value="ECO:0007669"/>
    <property type="project" value="InterPro"/>
</dbReference>
<dbReference type="GO" id="GO:0090564">
    <property type="term" value="F:protein-phosphocysteine-glucose phosphotransferase system transporter activity"/>
    <property type="evidence" value="ECO:0007669"/>
    <property type="project" value="TreeGrafter"/>
</dbReference>
<dbReference type="GO" id="GO:1904659">
    <property type="term" value="P:D-glucose transmembrane transport"/>
    <property type="evidence" value="ECO:0007669"/>
    <property type="project" value="InterPro"/>
</dbReference>
<dbReference type="GO" id="GO:0009401">
    <property type="term" value="P:phosphoenolpyruvate-dependent sugar phosphotransferase system"/>
    <property type="evidence" value="ECO:0007669"/>
    <property type="project" value="UniProtKB-KW"/>
</dbReference>
<dbReference type="CDD" id="cd00212">
    <property type="entry name" value="PTS_IIB_glc"/>
    <property type="match status" value="1"/>
</dbReference>
<dbReference type="FunFam" id="3.30.1360.60:FF:000001">
    <property type="entry name" value="PTS system glucose-specific IIBC component PtsG"/>
    <property type="match status" value="1"/>
</dbReference>
<dbReference type="Gene3D" id="3.30.1360.60">
    <property type="entry name" value="Glucose permease domain IIB"/>
    <property type="match status" value="1"/>
</dbReference>
<dbReference type="InterPro" id="IPR036878">
    <property type="entry name" value="Glu_permease_IIB"/>
</dbReference>
<dbReference type="InterPro" id="IPR018113">
    <property type="entry name" value="PTrfase_EIIB_Cys"/>
</dbReference>
<dbReference type="InterPro" id="IPR003352">
    <property type="entry name" value="PTS_EIIC"/>
</dbReference>
<dbReference type="InterPro" id="IPR013013">
    <property type="entry name" value="PTS_EIIC_1"/>
</dbReference>
<dbReference type="InterPro" id="IPR050429">
    <property type="entry name" value="PTS_Glucose_EIICBA"/>
</dbReference>
<dbReference type="InterPro" id="IPR001996">
    <property type="entry name" value="PTS_IIB_1"/>
</dbReference>
<dbReference type="InterPro" id="IPR011299">
    <property type="entry name" value="PTS_IIBC_glc"/>
</dbReference>
<dbReference type="NCBIfam" id="TIGR00826">
    <property type="entry name" value="EIIB_glc"/>
    <property type="match status" value="1"/>
</dbReference>
<dbReference type="NCBIfam" id="NF008301">
    <property type="entry name" value="PRK11089.1"/>
    <property type="match status" value="1"/>
</dbReference>
<dbReference type="NCBIfam" id="TIGR02002">
    <property type="entry name" value="PTS-II-BC-glcB"/>
    <property type="match status" value="1"/>
</dbReference>
<dbReference type="PANTHER" id="PTHR30009">
    <property type="entry name" value="CYTOCHROME C-TYPE SYNTHESIS PROTEIN AND PTS TRANSMEMBRANE COMPONENT"/>
    <property type="match status" value="1"/>
</dbReference>
<dbReference type="PANTHER" id="PTHR30009:SF20">
    <property type="entry name" value="PTS SYSTEM GLUCOSE-SPECIFIC EIICB COMPONENT-RELATED"/>
    <property type="match status" value="1"/>
</dbReference>
<dbReference type="Pfam" id="PF00367">
    <property type="entry name" value="PTS_EIIB"/>
    <property type="match status" value="1"/>
</dbReference>
<dbReference type="Pfam" id="PF02378">
    <property type="entry name" value="PTS_EIIC"/>
    <property type="match status" value="1"/>
</dbReference>
<dbReference type="SUPFAM" id="SSF55604">
    <property type="entry name" value="Glucose permease domain IIB"/>
    <property type="match status" value="1"/>
</dbReference>
<dbReference type="PROSITE" id="PS51098">
    <property type="entry name" value="PTS_EIIB_TYPE_1"/>
    <property type="match status" value="1"/>
</dbReference>
<dbReference type="PROSITE" id="PS01035">
    <property type="entry name" value="PTS_EIIB_TYPE_1_CYS"/>
    <property type="match status" value="1"/>
</dbReference>
<dbReference type="PROSITE" id="PS51103">
    <property type="entry name" value="PTS_EIIC_TYPE_1"/>
    <property type="match status" value="1"/>
</dbReference>
<proteinExistence type="inferred from homology"/>
<sequence length="479" mass="52157">MFKNAFSNLQKIGRSLMLPVSVLPIAGILLGIGSANFKIIPHTISNIMTEAGSSVFSNMPLIFAIGIALGFTKNDGVSALAAVVSYGIMTKTLSITIPIFSNLSDINVNQKYLLDTGILGGIIAGSISAYIFNTFYRIQLPEYLGFFAGRRFVPIASGLISIIFGCILSIIWPPIGNVIKTFSEWAAYQNPTLAFGIYGTVERALVPFGLHHIWNVPFQMQIGEYNNSIGQIFHGDIARYMAGDSTAGKLSGGFIFKMYGLPFAALAMWHCANKKNKAKIGGIMMSGALTAILTGITEPIEFSFILVAPILYVIHAILAGLAFPICILLNMRSGTSFSHGLIDFIVLSGNSNNFWLFPIVGLFYGILYYGIFYFMIKKFNLKTPGREKSITYINQKTIKETALLVISILGGKTNIINLDACITRLRITVLDISKVNQKKLKNLGASGVIVSGSGIQIVFGTQSDHIKTEIDNYMSNTNQ</sequence>
<evidence type="ECO:0000250" key="1">
    <source>
        <dbReference type="UniProtKB" id="P69786"/>
    </source>
</evidence>
<evidence type="ECO:0000255" key="2">
    <source>
        <dbReference type="PROSITE-ProRule" id="PRU00421"/>
    </source>
</evidence>
<evidence type="ECO:0000255" key="3">
    <source>
        <dbReference type="PROSITE-ProRule" id="PRU00426"/>
    </source>
</evidence>
<feature type="chain" id="PRO_0000186527" description="PTS system glucose-specific EIICB component">
    <location>
        <begin position="1"/>
        <end position="479"/>
    </location>
</feature>
<feature type="transmembrane region" description="Helical" evidence="3">
    <location>
        <begin position="15"/>
        <end position="35"/>
    </location>
</feature>
<feature type="transmembrane region" description="Helical" evidence="3">
    <location>
        <begin position="51"/>
        <end position="71"/>
    </location>
</feature>
<feature type="transmembrane region" description="Helical" evidence="3">
    <location>
        <begin position="80"/>
        <end position="100"/>
    </location>
</feature>
<feature type="transmembrane region" description="Helical" evidence="3">
    <location>
        <begin position="112"/>
        <end position="132"/>
    </location>
</feature>
<feature type="transmembrane region" description="Helical" evidence="3">
    <location>
        <begin position="152"/>
        <end position="172"/>
    </location>
</feature>
<feature type="transmembrane region" description="Helical" evidence="3">
    <location>
        <begin position="252"/>
        <end position="272"/>
    </location>
</feature>
<feature type="transmembrane region" description="Helical" evidence="3">
    <location>
        <begin position="280"/>
        <end position="300"/>
    </location>
</feature>
<feature type="transmembrane region" description="Helical" evidence="3">
    <location>
        <begin position="305"/>
        <end position="325"/>
    </location>
</feature>
<feature type="transmembrane region" description="Helical" evidence="3">
    <location>
        <begin position="356"/>
        <end position="376"/>
    </location>
</feature>
<feature type="domain" description="PTS EIIC type-1" evidence="3">
    <location>
        <begin position="1"/>
        <end position="388"/>
    </location>
</feature>
<feature type="domain" description="PTS EIIB type-1" evidence="2">
    <location>
        <begin position="399"/>
        <end position="479"/>
    </location>
</feature>
<feature type="active site" description="Phosphocysteine intermediate; for EIIB activity" evidence="1 2">
    <location>
        <position position="421"/>
    </location>
</feature>
<feature type="modified residue" description="Phosphocysteine" evidence="1">
    <location>
        <position position="421"/>
    </location>
</feature>
<keyword id="KW-0997">Cell inner membrane</keyword>
<keyword id="KW-1003">Cell membrane</keyword>
<keyword id="KW-0418">Kinase</keyword>
<keyword id="KW-0472">Membrane</keyword>
<keyword id="KW-0597">Phosphoprotein</keyword>
<keyword id="KW-0598">Phosphotransferase system</keyword>
<keyword id="KW-1185">Reference proteome</keyword>
<keyword id="KW-0762">Sugar transport</keyword>
<keyword id="KW-0808">Transferase</keyword>
<keyword id="KW-0812">Transmembrane</keyword>
<keyword id="KW-1133">Transmembrane helix</keyword>
<keyword id="KW-0813">Transport</keyword>
<protein>
    <recommendedName>
        <fullName evidence="1">PTS system glucose-specific EIICB component</fullName>
    </recommendedName>
    <alternativeName>
        <fullName evidence="1">EIICB-Glc</fullName>
        <shortName evidence="1">EII-Glc</shortName>
    </alternativeName>
    <domain>
        <recommendedName>
            <fullName evidence="1">Glucose permease IIC component</fullName>
        </recommendedName>
        <alternativeName>
            <fullName evidence="1">PTS system glucose-specific EIIC component</fullName>
        </alternativeName>
    </domain>
    <domain>
        <recommendedName>
            <fullName evidence="1">Glucose-specific phosphotransferase enzyme IIB component</fullName>
            <ecNumber evidence="1">2.7.1.199</ecNumber>
        </recommendedName>
        <alternativeName>
            <fullName evidence="1">PTS system glucose-specific EIIB component</fullName>
        </alternativeName>
    </domain>
</protein>